<organism>
    <name type="scientific">Staphylococcus aureus (strain Newman)</name>
    <dbReference type="NCBI Taxonomy" id="426430"/>
    <lineage>
        <taxon>Bacteria</taxon>
        <taxon>Bacillati</taxon>
        <taxon>Bacillota</taxon>
        <taxon>Bacilli</taxon>
        <taxon>Bacillales</taxon>
        <taxon>Staphylococcaceae</taxon>
        <taxon>Staphylococcus</taxon>
    </lineage>
</organism>
<gene>
    <name type="primary">putP</name>
    <name type="ordered locus">NWMN_1840</name>
</gene>
<reference key="1">
    <citation type="journal article" date="2008" name="J. Bacteriol.">
        <title>Genome sequence of Staphylococcus aureus strain Newman and comparative analysis of staphylococcal genomes: polymorphism and evolution of two major pathogenicity islands.</title>
        <authorList>
            <person name="Baba T."/>
            <person name="Bae T."/>
            <person name="Schneewind O."/>
            <person name="Takeuchi F."/>
            <person name="Hiramatsu K."/>
        </authorList>
    </citation>
    <scope>NUCLEOTIDE SEQUENCE [LARGE SCALE GENOMIC DNA]</scope>
    <source>
        <strain>Newman</strain>
    </source>
</reference>
<accession>A6QID0</accession>
<keyword id="KW-0029">Amino-acid transport</keyword>
<keyword id="KW-1003">Cell membrane</keyword>
<keyword id="KW-0406">Ion transport</keyword>
<keyword id="KW-0472">Membrane</keyword>
<keyword id="KW-0915">Sodium</keyword>
<keyword id="KW-0739">Sodium transport</keyword>
<keyword id="KW-0769">Symport</keyword>
<keyword id="KW-0812">Transmembrane</keyword>
<keyword id="KW-1133">Transmembrane helix</keyword>
<keyword id="KW-0813">Transport</keyword>
<dbReference type="EMBL" id="AP009351">
    <property type="protein sequence ID" value="BAF68112.1"/>
    <property type="status" value="ALT_INIT"/>
    <property type="molecule type" value="Genomic_DNA"/>
</dbReference>
<dbReference type="RefSeq" id="WP_000957010.1">
    <property type="nucleotide sequence ID" value="NZ_JBBIAE010000010.1"/>
</dbReference>
<dbReference type="SMR" id="A6QID0"/>
<dbReference type="KEGG" id="sae:NWMN_1840"/>
<dbReference type="HOGENOM" id="CLU_018808_15_2_9"/>
<dbReference type="Proteomes" id="UP000006386">
    <property type="component" value="Chromosome"/>
</dbReference>
<dbReference type="GO" id="GO:0005886">
    <property type="term" value="C:plasma membrane"/>
    <property type="evidence" value="ECO:0007669"/>
    <property type="project" value="UniProtKB-SubCell"/>
</dbReference>
<dbReference type="GO" id="GO:0015193">
    <property type="term" value="F:L-proline transmembrane transporter activity"/>
    <property type="evidence" value="ECO:0007669"/>
    <property type="project" value="TreeGrafter"/>
</dbReference>
<dbReference type="GO" id="GO:0005298">
    <property type="term" value="F:proline:sodium symporter activity"/>
    <property type="evidence" value="ECO:0007669"/>
    <property type="project" value="InterPro"/>
</dbReference>
<dbReference type="GO" id="GO:0031402">
    <property type="term" value="F:sodium ion binding"/>
    <property type="evidence" value="ECO:0007669"/>
    <property type="project" value="InterPro"/>
</dbReference>
<dbReference type="GO" id="GO:0015824">
    <property type="term" value="P:proline transport"/>
    <property type="evidence" value="ECO:0007669"/>
    <property type="project" value="InterPro"/>
</dbReference>
<dbReference type="CDD" id="cd11475">
    <property type="entry name" value="SLC5sbd_PutP"/>
    <property type="match status" value="1"/>
</dbReference>
<dbReference type="FunFam" id="1.20.1730.10:FF:000002">
    <property type="entry name" value="Sodium/proline symporter"/>
    <property type="match status" value="1"/>
</dbReference>
<dbReference type="Gene3D" id="1.20.1730.10">
    <property type="entry name" value="Sodium/glucose cotransporter"/>
    <property type="match status" value="1"/>
</dbReference>
<dbReference type="InterPro" id="IPR038377">
    <property type="entry name" value="Na/Glc_symporter_sf"/>
</dbReference>
<dbReference type="InterPro" id="IPR011851">
    <property type="entry name" value="Na/Pro_symporter"/>
</dbReference>
<dbReference type="InterPro" id="IPR001734">
    <property type="entry name" value="Na/solute_symporter"/>
</dbReference>
<dbReference type="InterPro" id="IPR050277">
    <property type="entry name" value="Sodium:Solute_Symporter"/>
</dbReference>
<dbReference type="NCBIfam" id="TIGR02121">
    <property type="entry name" value="Na_Pro_sym"/>
    <property type="match status" value="1"/>
</dbReference>
<dbReference type="NCBIfam" id="TIGR00813">
    <property type="entry name" value="sss"/>
    <property type="match status" value="1"/>
</dbReference>
<dbReference type="PANTHER" id="PTHR48086">
    <property type="entry name" value="SODIUM/PROLINE SYMPORTER-RELATED"/>
    <property type="match status" value="1"/>
</dbReference>
<dbReference type="PANTHER" id="PTHR48086:SF3">
    <property type="entry name" value="SODIUM_PROLINE SYMPORTER"/>
    <property type="match status" value="1"/>
</dbReference>
<dbReference type="Pfam" id="PF00474">
    <property type="entry name" value="SSF"/>
    <property type="match status" value="1"/>
</dbReference>
<dbReference type="PROSITE" id="PS50283">
    <property type="entry name" value="NA_SOLUT_SYMP_3"/>
    <property type="match status" value="1"/>
</dbReference>
<name>PUTP_STAAE</name>
<protein>
    <recommendedName>
        <fullName>Sodium/proline symporter</fullName>
    </recommendedName>
    <alternativeName>
        <fullName>Proline permease</fullName>
    </alternativeName>
</protein>
<feature type="chain" id="PRO_0000364103" description="Sodium/proline symporter">
    <location>
        <begin position="1"/>
        <end position="512"/>
    </location>
</feature>
<feature type="transmembrane region" description="Helical" evidence="3">
    <location>
        <begin position="16"/>
        <end position="36"/>
    </location>
</feature>
<feature type="transmembrane region" description="Helical" evidence="3">
    <location>
        <begin position="54"/>
        <end position="74"/>
    </location>
</feature>
<feature type="transmembrane region" description="Helical" evidence="3">
    <location>
        <begin position="85"/>
        <end position="105"/>
    </location>
</feature>
<feature type="transmembrane region" description="Helical" evidence="3">
    <location>
        <begin position="139"/>
        <end position="159"/>
    </location>
</feature>
<feature type="transmembrane region" description="Helical" evidence="3">
    <location>
        <begin position="174"/>
        <end position="194"/>
    </location>
</feature>
<feature type="transmembrane region" description="Helical" evidence="3">
    <location>
        <begin position="200"/>
        <end position="220"/>
    </location>
</feature>
<feature type="transmembrane region" description="Helical" evidence="3">
    <location>
        <begin position="240"/>
        <end position="260"/>
    </location>
</feature>
<feature type="transmembrane region" description="Helical" evidence="3">
    <location>
        <begin position="286"/>
        <end position="306"/>
    </location>
</feature>
<feature type="transmembrane region" description="Helical" evidence="3">
    <location>
        <begin position="327"/>
        <end position="347"/>
    </location>
</feature>
<feature type="transmembrane region" description="Helical" evidence="3">
    <location>
        <begin position="381"/>
        <end position="401"/>
    </location>
</feature>
<feature type="transmembrane region" description="Helical" evidence="3">
    <location>
        <begin position="410"/>
        <end position="430"/>
    </location>
</feature>
<feature type="transmembrane region" description="Helical" evidence="3">
    <location>
        <begin position="438"/>
        <end position="458"/>
    </location>
</feature>
<feature type="transmembrane region" description="Helical" evidence="3">
    <location>
        <begin position="467"/>
        <end position="487"/>
    </location>
</feature>
<evidence type="ECO:0000250" key="1">
    <source>
        <dbReference type="UniProtKB" id="P07117"/>
    </source>
</evidence>
<evidence type="ECO:0000250" key="2">
    <source>
        <dbReference type="UniProtKB" id="Q2FWY7"/>
    </source>
</evidence>
<evidence type="ECO:0000255" key="3"/>
<evidence type="ECO:0000305" key="4"/>
<sequence>MLTMGTALSQQVDANWQTYIMIAVYFLILIVIGFYGYKQATGNLSEYMLGGRSIGPYITALSAGASDMSGWMIMELPGSVYSTGLSAMWITIGLTLGAYINYFVVAPRLRVYTELAGDAITLPDFFKNRLNDKNNVLKIISGLIIVVFFTLYTHSGFVSGGKLFESAFGLDYHFGLILVAFIVIFYTFFGGYLAVSITDFFQGVIMLIAMVMVPIVAMMNLNGWGTFHDVAAMKPTNLNLFKGLSFIGIISLFSWGLGYFGQPHIIVRFMSIKSHKMLPKARRLGISWMAVGLLGAVAVGLTGIAFVPAYHIKLEDPETLFIVMSQVLFHPLVGGFLLAAILAAIMSTISSQLLVTSSSLTEDFYKLIRGEEKAKTHQKEFVMIGRLSVLVVAIVAIAIAWNPNDTILNLVGNAWAGFGASFSPLVLFALYWKGLTRAGAVSGMVSGALVVIVWIAWIKPLAHINEIFGLYEIIPGFIVSVIVTYVVSKLTKKPGAFVETDLNKVRDIVREK</sequence>
<proteinExistence type="inferred from homology"/>
<comment type="function">
    <text evidence="1 2">Catalyzes the sodium-dependent uptake of extracellular L-proline (By similarity). Since most S.aureus strains are L-proline auxotrophs, this transporter may aid the bacterial persistence during an infection of tissues with low proline concentrations (By similarity).</text>
</comment>
<comment type="catalytic activity">
    <reaction evidence="1">
        <text>L-proline(in) + Na(+)(in) = L-proline(out) + Na(+)(out)</text>
        <dbReference type="Rhea" id="RHEA:28967"/>
        <dbReference type="ChEBI" id="CHEBI:29101"/>
        <dbReference type="ChEBI" id="CHEBI:60039"/>
    </reaction>
</comment>
<comment type="subcellular location">
    <subcellularLocation>
        <location evidence="4">Cell membrane</location>
        <topology evidence="3">Multi-pass membrane protein</topology>
    </subcellularLocation>
</comment>
<comment type="similarity">
    <text evidence="4">Belongs to the sodium:solute symporter (SSF) (TC 2.A.21) family.</text>
</comment>
<comment type="sequence caution" evidence="4">
    <conflict type="erroneous initiation">
        <sequence resource="EMBL-CDS" id="BAF68112"/>
    </conflict>
</comment>